<protein>
    <recommendedName>
        <fullName>Uncharacterized protein MJ0560</fullName>
    </recommendedName>
</protein>
<organism>
    <name type="scientific">Methanocaldococcus jannaschii (strain ATCC 43067 / DSM 2661 / JAL-1 / JCM 10045 / NBRC 100440)</name>
    <name type="common">Methanococcus jannaschii</name>
    <dbReference type="NCBI Taxonomy" id="243232"/>
    <lineage>
        <taxon>Archaea</taxon>
        <taxon>Methanobacteriati</taxon>
        <taxon>Methanobacteriota</taxon>
        <taxon>Methanomada group</taxon>
        <taxon>Methanococci</taxon>
        <taxon>Methanococcales</taxon>
        <taxon>Methanocaldococcaceae</taxon>
        <taxon>Methanocaldococcus</taxon>
    </lineage>
</organism>
<sequence>MMIMKFVRLEFISYEESYDFEFMAPDDITEDKFIDDLSDAIVKSINWEYIKGYFQEEDELGMEILPNLIDCIDFKNVNVEMEKKGYKPIKYDIIVYAGAWSYFNPKKLSIIDFHETGELTKLEKAIQEKLKRLKTDIY</sequence>
<feature type="chain" id="PRO_0000106931" description="Uncharacterized protein MJ0560">
    <location>
        <begin position="1"/>
        <end position="138"/>
    </location>
</feature>
<dbReference type="EMBL" id="L77117">
    <property type="protein sequence ID" value="AAB98559.1"/>
    <property type="molecule type" value="Genomic_DNA"/>
</dbReference>
<dbReference type="PIR" id="H64369">
    <property type="entry name" value="H64369"/>
</dbReference>
<dbReference type="PaxDb" id="243232-MJ_0560"/>
<dbReference type="EnsemblBacteria" id="AAB98559">
    <property type="protein sequence ID" value="AAB98559"/>
    <property type="gene ID" value="MJ_0560"/>
</dbReference>
<dbReference type="KEGG" id="mja:MJ_0560"/>
<dbReference type="eggNOG" id="arCOG12718">
    <property type="taxonomic scope" value="Archaea"/>
</dbReference>
<dbReference type="HOGENOM" id="CLU_1850669_0_0_2"/>
<dbReference type="InParanoid" id="Q57980"/>
<dbReference type="OrthoDB" id="376446at2157"/>
<dbReference type="Proteomes" id="UP000000805">
    <property type="component" value="Chromosome"/>
</dbReference>
<proteinExistence type="predicted"/>
<reference key="1">
    <citation type="journal article" date="1996" name="Science">
        <title>Complete genome sequence of the methanogenic archaeon, Methanococcus jannaschii.</title>
        <authorList>
            <person name="Bult C.J."/>
            <person name="White O."/>
            <person name="Olsen G.J."/>
            <person name="Zhou L."/>
            <person name="Fleischmann R.D."/>
            <person name="Sutton G.G."/>
            <person name="Blake J.A."/>
            <person name="FitzGerald L.M."/>
            <person name="Clayton R.A."/>
            <person name="Gocayne J.D."/>
            <person name="Kerlavage A.R."/>
            <person name="Dougherty B.A."/>
            <person name="Tomb J.-F."/>
            <person name="Adams M.D."/>
            <person name="Reich C.I."/>
            <person name="Overbeek R."/>
            <person name="Kirkness E.F."/>
            <person name="Weinstock K.G."/>
            <person name="Merrick J.M."/>
            <person name="Glodek A."/>
            <person name="Scott J.L."/>
            <person name="Geoghagen N.S.M."/>
            <person name="Weidman J.F."/>
            <person name="Fuhrmann J.L."/>
            <person name="Nguyen D."/>
            <person name="Utterback T.R."/>
            <person name="Kelley J.M."/>
            <person name="Peterson J.D."/>
            <person name="Sadow P.W."/>
            <person name="Hanna M.C."/>
            <person name="Cotton M.D."/>
            <person name="Roberts K.M."/>
            <person name="Hurst M.A."/>
            <person name="Kaine B.P."/>
            <person name="Borodovsky M."/>
            <person name="Klenk H.-P."/>
            <person name="Fraser C.M."/>
            <person name="Smith H.O."/>
            <person name="Woese C.R."/>
            <person name="Venter J.C."/>
        </authorList>
    </citation>
    <scope>NUCLEOTIDE SEQUENCE [LARGE SCALE GENOMIC DNA]</scope>
    <source>
        <strain>ATCC 43067 / DSM 2661 / JAL-1 / JCM 10045 / NBRC 100440</strain>
    </source>
</reference>
<name>Y560_METJA</name>
<accession>Q57980</accession>
<gene>
    <name type="ordered locus">MJ0560</name>
</gene>
<keyword id="KW-1185">Reference proteome</keyword>